<organismHost>
    <name type="scientific">Lactococcus lactis subsp. cremoris</name>
    <name type="common">Streptococcus cremoris</name>
    <dbReference type="NCBI Taxonomy" id="1359"/>
</organismHost>
<protein>
    <recommendedName>
        <fullName>Crossover junction endodeoxyribonuclease rusA</fullName>
        <ecNumber>3.1.21.10</ecNumber>
    </recommendedName>
    <alternativeName>
        <fullName>Holliday junction nuclease rusA</fullName>
    </alternativeName>
    <alternativeName>
        <fullName>Holliday junction resolvase</fullName>
    </alternativeName>
</protein>
<keyword id="KW-0227">DNA damage</keyword>
<keyword id="KW-0233">DNA recombination</keyword>
<keyword id="KW-0234">DNA repair</keyword>
<keyword id="KW-0255">Endonuclease</keyword>
<keyword id="KW-0378">Hydrolase</keyword>
<keyword id="KW-0460">Magnesium</keyword>
<keyword id="KW-0479">Metal-binding</keyword>
<keyword id="KW-0540">Nuclease</keyword>
<keyword id="KW-1185">Reference proteome</keyword>
<name>RUSA_BPR1T</name>
<reference key="1">
    <citation type="journal article" date="1996" name="Mol. Microbiol.">
        <title>Inducible gene expression mediated by a repressor-operator system isolated from Lactococcus lactis bacteriophage r1t.</title>
        <authorList>
            <person name="Nauta A."/>
            <person name="van Sinderen D."/>
            <person name="Karsens H."/>
            <person name="Smit E."/>
            <person name="Venema G."/>
            <person name="Kok J."/>
        </authorList>
    </citation>
    <scope>NUCLEOTIDE SEQUENCE [GENOMIC DNA]</scope>
</reference>
<reference key="2">
    <citation type="journal article" date="1996" name="Mol. Microbiol.">
        <title>Sequence analysis and molecular characterization of the temperate lactococcal bacteriophage r1t.</title>
        <authorList>
            <person name="van Sinderen D."/>
            <person name="Karsens H."/>
            <person name="Kok J."/>
            <person name="Terpstra P."/>
            <person name="Ruiters M.H."/>
            <person name="Venema G."/>
            <person name="Nauta A."/>
        </authorList>
    </citation>
    <scope>NUCLEOTIDE SEQUENCE [GENOMIC DNA]</scope>
</reference>
<reference key="3">
    <citation type="journal article" date="2002" name="Mol. Microbiol.">
        <title>RusA proteins from the extreme thermophile Aquifex aeolicus and lactococcal phage r1t resolve Holliday junctions.</title>
        <authorList>
            <person name="Sharples G.J."/>
            <person name="Bolt E.L."/>
            <person name="Lloyd R.G."/>
        </authorList>
    </citation>
    <scope>FUNCTION</scope>
</reference>
<gene>
    <name type="primary">rusA</name>
    <name type="ORF">ORF14</name>
</gene>
<evidence type="ECO:0000250" key="1"/>
<evidence type="ECO:0000269" key="2">
    <source>
    </source>
</evidence>
<evidence type="ECO:0000305" key="3"/>
<organism>
    <name type="scientific">Lactococcus phage r1t</name>
    <name type="common">Bacteriophage r1t</name>
    <dbReference type="NCBI Taxonomy" id="43685"/>
    <lineage>
        <taxon>Viruses</taxon>
        <taxon>Duplodnaviria</taxon>
        <taxon>Heunggongvirae</taxon>
        <taxon>Uroviricota</taxon>
        <taxon>Caudoviricetes</taxon>
    </lineage>
</organism>
<dbReference type="EC" id="3.1.21.10"/>
<dbReference type="EMBL" id="U38906">
    <property type="protein sequence ID" value="AAB18689.1"/>
    <property type="molecule type" value="Genomic_DNA"/>
</dbReference>
<dbReference type="RefSeq" id="NP_695042.1">
    <property type="nucleotide sequence ID" value="NC_004302.1"/>
</dbReference>
<dbReference type="SMR" id="Q38100"/>
<dbReference type="KEGG" id="vg:955502"/>
<dbReference type="OrthoDB" id="14795at10239"/>
<dbReference type="Proteomes" id="UP000001164">
    <property type="component" value="Genome"/>
</dbReference>
<dbReference type="GO" id="GO:0004519">
    <property type="term" value="F:endonuclease activity"/>
    <property type="evidence" value="ECO:0007669"/>
    <property type="project" value="UniProtKB-KW"/>
</dbReference>
<dbReference type="GO" id="GO:0000287">
    <property type="term" value="F:magnesium ion binding"/>
    <property type="evidence" value="ECO:0007669"/>
    <property type="project" value="InterPro"/>
</dbReference>
<dbReference type="GO" id="GO:0006310">
    <property type="term" value="P:DNA recombination"/>
    <property type="evidence" value="ECO:0007669"/>
    <property type="project" value="UniProtKB-KW"/>
</dbReference>
<dbReference type="GO" id="GO:0006281">
    <property type="term" value="P:DNA repair"/>
    <property type="evidence" value="ECO:0007669"/>
    <property type="project" value="UniProtKB-KW"/>
</dbReference>
<dbReference type="Gene3D" id="3.30.1330.70">
    <property type="entry name" value="Holliday junction resolvase RusA"/>
    <property type="match status" value="1"/>
</dbReference>
<dbReference type="InterPro" id="IPR008822">
    <property type="entry name" value="Endonuclease_RusA-like"/>
</dbReference>
<dbReference type="InterPro" id="IPR036614">
    <property type="entry name" value="RusA-like_sf"/>
</dbReference>
<dbReference type="Pfam" id="PF05866">
    <property type="entry name" value="RusA"/>
    <property type="match status" value="1"/>
</dbReference>
<dbReference type="SUPFAM" id="SSF103084">
    <property type="entry name" value="Holliday junction resolvase RusA"/>
    <property type="match status" value="1"/>
</dbReference>
<sequence length="131" mass="16001">MKFEFEFELDKMPTTQQQKGIKKVKGKLQFYDRRGTNNYSLKAQLMKNKPKECFEKNVPLKLSVTFFYAIKQKKRWWQWKTSRPDLDNLMKNLQDYMTKLRYYSDDSQIVWLEAKKVNDEKNRIEIEITEV</sequence>
<proteinExistence type="inferred from homology"/>
<comment type="function">
    <text evidence="2">Endonuclease that resolves Holliday junction intermediates. Promotes DNA repair. Exhibits sequence and structure-selective cleavage of four-way DNA junctions, where it introduces symmetrical nicks in two strands of the same polarity, though it can also cut branched DNA structures that lack the symmetry of Holliday junctions.</text>
</comment>
<comment type="catalytic activity">
    <reaction>
        <text>Endonucleolytic cleavage at a junction such as a reciprocal single-stranded crossover between two homologous DNA duplexes (Holliday junction).</text>
        <dbReference type="EC" id="3.1.21.10"/>
    </reaction>
</comment>
<comment type="cofactor">
    <cofactor evidence="1">
        <name>Mg(2+)</name>
        <dbReference type="ChEBI" id="CHEBI:18420"/>
    </cofactor>
    <text evidence="1">Binds 1 Mg(2+) ion per subunit.</text>
</comment>
<comment type="subunit">
    <text evidence="1">Homodimer.</text>
</comment>
<comment type="similarity">
    <text evidence="3">Belongs to the RusA family.</text>
</comment>
<feature type="chain" id="PRO_0000324839" description="Crossover junction endodeoxyribonuclease rusA">
    <location>
        <begin position="1"/>
        <end position="131"/>
    </location>
</feature>
<feature type="binding site" evidence="1">
    <location>
        <position position="85"/>
    </location>
    <ligand>
        <name>Mg(2+)</name>
        <dbReference type="ChEBI" id="CHEBI:18420"/>
    </ligand>
</feature>
<feature type="binding site" evidence="1">
    <location>
        <position position="87"/>
    </location>
    <ligand>
        <name>Mg(2+)</name>
        <dbReference type="ChEBI" id="CHEBI:18420"/>
    </ligand>
</feature>
<feature type="binding site" evidence="1">
    <location>
        <position position="106"/>
    </location>
    <ligand>
        <name>Mg(2+)</name>
        <dbReference type="ChEBI" id="CHEBI:18420"/>
    </ligand>
</feature>
<accession>Q38100</accession>